<feature type="chain" id="PRO_1000203023" description="Elongation factor 1-alpha">
    <location>
        <begin position="1"/>
        <end position="428"/>
    </location>
</feature>
<feature type="domain" description="tr-type G">
    <location>
        <begin position="5"/>
        <end position="217"/>
    </location>
</feature>
<feature type="region of interest" description="G1" evidence="1">
    <location>
        <begin position="14"/>
        <end position="21"/>
    </location>
</feature>
<feature type="region of interest" description="G2" evidence="1">
    <location>
        <begin position="68"/>
        <end position="72"/>
    </location>
</feature>
<feature type="region of interest" description="G3" evidence="1">
    <location>
        <begin position="89"/>
        <end position="92"/>
    </location>
</feature>
<feature type="region of interest" description="G4" evidence="1">
    <location>
        <begin position="144"/>
        <end position="147"/>
    </location>
</feature>
<feature type="region of interest" description="G5" evidence="1">
    <location>
        <begin position="181"/>
        <end position="183"/>
    </location>
</feature>
<feature type="binding site" evidence="2">
    <location>
        <begin position="14"/>
        <end position="21"/>
    </location>
    <ligand>
        <name>GTP</name>
        <dbReference type="ChEBI" id="CHEBI:37565"/>
    </ligand>
</feature>
<feature type="binding site" evidence="2">
    <location>
        <position position="21"/>
    </location>
    <ligand>
        <name>Mg(2+)</name>
        <dbReference type="ChEBI" id="CHEBI:18420"/>
    </ligand>
</feature>
<feature type="binding site" evidence="2">
    <location>
        <begin position="89"/>
        <end position="93"/>
    </location>
    <ligand>
        <name>GTP</name>
        <dbReference type="ChEBI" id="CHEBI:37565"/>
    </ligand>
</feature>
<feature type="binding site" evidence="2">
    <location>
        <begin position="144"/>
        <end position="147"/>
    </location>
    <ligand>
        <name>GTP</name>
        <dbReference type="ChEBI" id="CHEBI:37565"/>
    </ligand>
</feature>
<name>EF1A_THESM</name>
<proteinExistence type="inferred from homology"/>
<keyword id="KW-0963">Cytoplasm</keyword>
<keyword id="KW-0251">Elongation factor</keyword>
<keyword id="KW-0342">GTP-binding</keyword>
<keyword id="KW-0378">Hydrolase</keyword>
<keyword id="KW-0460">Magnesium</keyword>
<keyword id="KW-0479">Metal-binding</keyword>
<keyword id="KW-0547">Nucleotide-binding</keyword>
<keyword id="KW-0648">Protein biosynthesis</keyword>
<keyword id="KW-1185">Reference proteome</keyword>
<dbReference type="EC" id="3.6.5.3" evidence="2"/>
<dbReference type="EMBL" id="CP001463">
    <property type="protein sequence ID" value="ACS90612.1"/>
    <property type="molecule type" value="Genomic_DNA"/>
</dbReference>
<dbReference type="RefSeq" id="WP_015849829.1">
    <property type="nucleotide sequence ID" value="NC_012883.1"/>
</dbReference>
<dbReference type="SMR" id="C6A4R7"/>
<dbReference type="STRING" id="604354.TSIB_1561"/>
<dbReference type="GeneID" id="8096570"/>
<dbReference type="KEGG" id="tsi:TSIB_1561"/>
<dbReference type="eggNOG" id="arCOG01561">
    <property type="taxonomic scope" value="Archaea"/>
</dbReference>
<dbReference type="HOGENOM" id="CLU_007265_3_5_2"/>
<dbReference type="OrthoDB" id="371718at2157"/>
<dbReference type="Proteomes" id="UP000009079">
    <property type="component" value="Chromosome"/>
</dbReference>
<dbReference type="GO" id="GO:0005737">
    <property type="term" value="C:cytoplasm"/>
    <property type="evidence" value="ECO:0007669"/>
    <property type="project" value="UniProtKB-SubCell"/>
</dbReference>
<dbReference type="GO" id="GO:0005525">
    <property type="term" value="F:GTP binding"/>
    <property type="evidence" value="ECO:0007669"/>
    <property type="project" value="UniProtKB-UniRule"/>
</dbReference>
<dbReference type="GO" id="GO:0003924">
    <property type="term" value="F:GTPase activity"/>
    <property type="evidence" value="ECO:0007669"/>
    <property type="project" value="InterPro"/>
</dbReference>
<dbReference type="GO" id="GO:0003746">
    <property type="term" value="F:translation elongation factor activity"/>
    <property type="evidence" value="ECO:0007669"/>
    <property type="project" value="UniProtKB-UniRule"/>
</dbReference>
<dbReference type="CDD" id="cd01883">
    <property type="entry name" value="EF1_alpha"/>
    <property type="match status" value="1"/>
</dbReference>
<dbReference type="CDD" id="cd03693">
    <property type="entry name" value="EF1_alpha_II"/>
    <property type="match status" value="1"/>
</dbReference>
<dbReference type="CDD" id="cd03705">
    <property type="entry name" value="EF1_alpha_III"/>
    <property type="match status" value="1"/>
</dbReference>
<dbReference type="FunFam" id="2.40.30.10:FF:000003">
    <property type="entry name" value="Elongation factor 1-alpha"/>
    <property type="match status" value="1"/>
</dbReference>
<dbReference type="FunFam" id="2.40.30.10:FF:000005">
    <property type="entry name" value="Elongation factor 1-alpha"/>
    <property type="match status" value="1"/>
</dbReference>
<dbReference type="Gene3D" id="3.40.50.300">
    <property type="entry name" value="P-loop containing nucleotide triphosphate hydrolases"/>
    <property type="match status" value="1"/>
</dbReference>
<dbReference type="Gene3D" id="2.40.30.10">
    <property type="entry name" value="Translation factors"/>
    <property type="match status" value="2"/>
</dbReference>
<dbReference type="HAMAP" id="MF_00118_A">
    <property type="entry name" value="EF_Tu_A"/>
    <property type="match status" value="1"/>
</dbReference>
<dbReference type="InterPro" id="IPR004161">
    <property type="entry name" value="EFTu-like_2"/>
</dbReference>
<dbReference type="InterPro" id="IPR031157">
    <property type="entry name" value="G_TR_CS"/>
</dbReference>
<dbReference type="InterPro" id="IPR054696">
    <property type="entry name" value="GTP-eEF1A_C"/>
</dbReference>
<dbReference type="InterPro" id="IPR027417">
    <property type="entry name" value="P-loop_NTPase"/>
</dbReference>
<dbReference type="InterPro" id="IPR005225">
    <property type="entry name" value="Small_GTP-bd"/>
</dbReference>
<dbReference type="InterPro" id="IPR000795">
    <property type="entry name" value="T_Tr_GTP-bd_dom"/>
</dbReference>
<dbReference type="InterPro" id="IPR050100">
    <property type="entry name" value="TRAFAC_GTPase_members"/>
</dbReference>
<dbReference type="InterPro" id="IPR009000">
    <property type="entry name" value="Transl_B-barrel_sf"/>
</dbReference>
<dbReference type="InterPro" id="IPR009001">
    <property type="entry name" value="Transl_elong_EF1A/Init_IF2_C"/>
</dbReference>
<dbReference type="InterPro" id="IPR004539">
    <property type="entry name" value="Transl_elong_EF1A_euk/arc"/>
</dbReference>
<dbReference type="NCBIfam" id="TIGR00483">
    <property type="entry name" value="EF-1_alpha"/>
    <property type="match status" value="1"/>
</dbReference>
<dbReference type="NCBIfam" id="NF008969">
    <property type="entry name" value="PRK12317.1"/>
    <property type="match status" value="1"/>
</dbReference>
<dbReference type="NCBIfam" id="TIGR00231">
    <property type="entry name" value="small_GTP"/>
    <property type="match status" value="1"/>
</dbReference>
<dbReference type="PANTHER" id="PTHR23115">
    <property type="entry name" value="TRANSLATION FACTOR"/>
    <property type="match status" value="1"/>
</dbReference>
<dbReference type="Pfam" id="PF22594">
    <property type="entry name" value="GTP-eEF1A_C"/>
    <property type="match status" value="1"/>
</dbReference>
<dbReference type="Pfam" id="PF00009">
    <property type="entry name" value="GTP_EFTU"/>
    <property type="match status" value="1"/>
</dbReference>
<dbReference type="Pfam" id="PF03144">
    <property type="entry name" value="GTP_EFTU_D2"/>
    <property type="match status" value="1"/>
</dbReference>
<dbReference type="PRINTS" id="PR00315">
    <property type="entry name" value="ELONGATNFCT"/>
</dbReference>
<dbReference type="SUPFAM" id="SSF50465">
    <property type="entry name" value="EF-Tu/eEF-1alpha/eIF2-gamma C-terminal domain"/>
    <property type="match status" value="1"/>
</dbReference>
<dbReference type="SUPFAM" id="SSF52540">
    <property type="entry name" value="P-loop containing nucleoside triphosphate hydrolases"/>
    <property type="match status" value="1"/>
</dbReference>
<dbReference type="SUPFAM" id="SSF50447">
    <property type="entry name" value="Translation proteins"/>
    <property type="match status" value="1"/>
</dbReference>
<dbReference type="PROSITE" id="PS00301">
    <property type="entry name" value="G_TR_1"/>
    <property type="match status" value="1"/>
</dbReference>
<dbReference type="PROSITE" id="PS51722">
    <property type="entry name" value="G_TR_2"/>
    <property type="match status" value="1"/>
</dbReference>
<sequence length="428" mass="47398">MAKEKPHVNIVFIGHVDHGKSTTIGRLLFDTANIPEQIIKKFEEMGEKGKSFKFAWVMDRLKEERERGITIDVAHTKFETPHRYITIIDAPGHRDFVKNMITGASQADAAVLIVAATDGVMPQTKEHAFLARTLGINHIIVGVNKMDAVKYDEKRFKEVATQVTKLLQMLGYKNFPVIPISAWEGDNVVKKSDKMPWYNGPTLIEALDQIPEPEKPTDKPLRIPIQDVYSIKGVGTVPVGRVETGVLKVGDVIIFEPASTIFHKPIQGEVKSIEMHHESMPEALPGDNIGFNVRGVGKNDIKRGDVAGHTTNPPTVVRPRDTFKAQIIVLNHPTAITIGYTPVLHAHTTQVAVRFEQLLAKLDPRTGNVVEENPQFIKTGDSAIVVLRPTKPMVIEPVKELPQLGRFAIRDMGQTVAAGMVISIQKGE</sequence>
<comment type="function">
    <text evidence="2">GTP hydrolase that promotes the GTP-dependent binding of aminoacyl-tRNA to the A-site of ribosomes during protein biosynthesis.</text>
</comment>
<comment type="catalytic activity">
    <reaction evidence="2">
        <text>GTP + H2O = GDP + phosphate + H(+)</text>
        <dbReference type="Rhea" id="RHEA:19669"/>
        <dbReference type="ChEBI" id="CHEBI:15377"/>
        <dbReference type="ChEBI" id="CHEBI:15378"/>
        <dbReference type="ChEBI" id="CHEBI:37565"/>
        <dbReference type="ChEBI" id="CHEBI:43474"/>
        <dbReference type="ChEBI" id="CHEBI:58189"/>
        <dbReference type="EC" id="3.6.5.3"/>
    </reaction>
    <physiologicalReaction direction="left-to-right" evidence="2">
        <dbReference type="Rhea" id="RHEA:19670"/>
    </physiologicalReaction>
</comment>
<comment type="subcellular location">
    <subcellularLocation>
        <location evidence="2">Cytoplasm</location>
    </subcellularLocation>
</comment>
<comment type="similarity">
    <text evidence="2">Belongs to the TRAFAC class translation factor GTPase superfamily. Classic translation factor GTPase family. EF-Tu/EF-1A subfamily.</text>
</comment>
<accession>C6A4R7</accession>
<organism>
    <name type="scientific">Thermococcus sibiricus (strain DSM 12597 / MM 739)</name>
    <dbReference type="NCBI Taxonomy" id="604354"/>
    <lineage>
        <taxon>Archaea</taxon>
        <taxon>Methanobacteriati</taxon>
        <taxon>Methanobacteriota</taxon>
        <taxon>Thermococci</taxon>
        <taxon>Thermococcales</taxon>
        <taxon>Thermococcaceae</taxon>
        <taxon>Thermococcus</taxon>
    </lineage>
</organism>
<gene>
    <name evidence="2" type="primary">tuf</name>
    <name type="ordered locus">TSIB_1561</name>
</gene>
<reference key="1">
    <citation type="journal article" date="2009" name="Appl. Environ. Microbiol.">
        <title>Metabolic versatility and indigenous origin of the archaeon Thermococcus sibiricus, isolated from a siberian oil reservoir, as revealed by genome analysis.</title>
        <authorList>
            <person name="Mardanov A.V."/>
            <person name="Ravin N.V."/>
            <person name="Svetlitchnyi V.A."/>
            <person name="Beletsky A.V."/>
            <person name="Miroshnichenko M.L."/>
            <person name="Bonch-Osmolovskaya E.A."/>
            <person name="Skryabin K.G."/>
        </authorList>
    </citation>
    <scope>NUCLEOTIDE SEQUENCE [LARGE SCALE GENOMIC DNA]</scope>
    <source>
        <strain>DSM 12597 / MM 739</strain>
    </source>
</reference>
<protein>
    <recommendedName>
        <fullName evidence="2">Elongation factor 1-alpha</fullName>
        <shortName evidence="2">EF-1-alpha</shortName>
        <ecNumber evidence="2">3.6.5.3</ecNumber>
    </recommendedName>
    <alternativeName>
        <fullName evidence="2">Elongation factor Tu</fullName>
        <shortName evidence="2">EF-Tu</shortName>
    </alternativeName>
</protein>
<evidence type="ECO:0000250" key="1"/>
<evidence type="ECO:0000255" key="2">
    <source>
        <dbReference type="HAMAP-Rule" id="MF_00118"/>
    </source>
</evidence>